<organism>
    <name type="scientific">Dehalococcoides mccartyi (strain ATCC BAA-2266 / KCTC 15142 / 195)</name>
    <name type="common">Dehalococcoides ethenogenes (strain 195)</name>
    <dbReference type="NCBI Taxonomy" id="243164"/>
    <lineage>
        <taxon>Bacteria</taxon>
        <taxon>Bacillati</taxon>
        <taxon>Chloroflexota</taxon>
        <taxon>Dehalococcoidia</taxon>
        <taxon>Dehalococcoidales</taxon>
        <taxon>Dehalococcoidaceae</taxon>
        <taxon>Dehalococcoides</taxon>
    </lineage>
</organism>
<dbReference type="EMBL" id="CP000027">
    <property type="protein sequence ID" value="AAW40417.1"/>
    <property type="molecule type" value="Genomic_DNA"/>
</dbReference>
<dbReference type="RefSeq" id="WP_010936118.1">
    <property type="nucleotide sequence ID" value="NC_002936.3"/>
</dbReference>
<dbReference type="SMR" id="Q3Z9L4"/>
<dbReference type="FunCoup" id="Q3Z9L4">
    <property type="interactions" value="331"/>
</dbReference>
<dbReference type="STRING" id="243164.DET0338"/>
<dbReference type="GeneID" id="23672674"/>
<dbReference type="KEGG" id="det:DET0338"/>
<dbReference type="eggNOG" id="COG0335">
    <property type="taxonomic scope" value="Bacteria"/>
</dbReference>
<dbReference type="HOGENOM" id="CLU_103507_2_0_0"/>
<dbReference type="InParanoid" id="Q3Z9L4"/>
<dbReference type="Proteomes" id="UP000008289">
    <property type="component" value="Chromosome"/>
</dbReference>
<dbReference type="GO" id="GO:0022625">
    <property type="term" value="C:cytosolic large ribosomal subunit"/>
    <property type="evidence" value="ECO:0007669"/>
    <property type="project" value="TreeGrafter"/>
</dbReference>
<dbReference type="GO" id="GO:0003735">
    <property type="term" value="F:structural constituent of ribosome"/>
    <property type="evidence" value="ECO:0007669"/>
    <property type="project" value="InterPro"/>
</dbReference>
<dbReference type="GO" id="GO:0006412">
    <property type="term" value="P:translation"/>
    <property type="evidence" value="ECO:0007669"/>
    <property type="project" value="UniProtKB-UniRule"/>
</dbReference>
<dbReference type="Gene3D" id="2.30.30.790">
    <property type="match status" value="1"/>
</dbReference>
<dbReference type="HAMAP" id="MF_00402">
    <property type="entry name" value="Ribosomal_bL19"/>
    <property type="match status" value="1"/>
</dbReference>
<dbReference type="InterPro" id="IPR001857">
    <property type="entry name" value="Ribosomal_bL19"/>
</dbReference>
<dbReference type="InterPro" id="IPR018257">
    <property type="entry name" value="Ribosomal_bL19_CS"/>
</dbReference>
<dbReference type="InterPro" id="IPR038657">
    <property type="entry name" value="Ribosomal_bL19_sf"/>
</dbReference>
<dbReference type="InterPro" id="IPR008991">
    <property type="entry name" value="Translation_prot_SH3-like_sf"/>
</dbReference>
<dbReference type="NCBIfam" id="TIGR01024">
    <property type="entry name" value="rplS_bact"/>
    <property type="match status" value="1"/>
</dbReference>
<dbReference type="PANTHER" id="PTHR15680:SF9">
    <property type="entry name" value="LARGE RIBOSOMAL SUBUNIT PROTEIN BL19M"/>
    <property type="match status" value="1"/>
</dbReference>
<dbReference type="PANTHER" id="PTHR15680">
    <property type="entry name" value="RIBOSOMAL PROTEIN L19"/>
    <property type="match status" value="1"/>
</dbReference>
<dbReference type="Pfam" id="PF01245">
    <property type="entry name" value="Ribosomal_L19"/>
    <property type="match status" value="1"/>
</dbReference>
<dbReference type="PIRSF" id="PIRSF002191">
    <property type="entry name" value="Ribosomal_L19"/>
    <property type="match status" value="1"/>
</dbReference>
<dbReference type="PRINTS" id="PR00061">
    <property type="entry name" value="RIBOSOMALL19"/>
</dbReference>
<dbReference type="SUPFAM" id="SSF50104">
    <property type="entry name" value="Translation proteins SH3-like domain"/>
    <property type="match status" value="1"/>
</dbReference>
<dbReference type="PROSITE" id="PS01015">
    <property type="entry name" value="RIBOSOMAL_L19"/>
    <property type="match status" value="1"/>
</dbReference>
<comment type="function">
    <text evidence="1">This protein is located at the 30S-50S ribosomal subunit interface and may play a role in the structure and function of the aminoacyl-tRNA binding site.</text>
</comment>
<comment type="similarity">
    <text evidence="1">Belongs to the bacterial ribosomal protein bL19 family.</text>
</comment>
<sequence length="136" mass="15147">MEETVNNQETPETSEEETADEETVAVENTAAGKVLPSFGPGDTIKVHARIKEGDKERIQMFQGVVLKVKQAADGGNFTVRRISYGVGVERTFPFLSPNVTKVEVIKRGRVRRARLFYLRKLSGKAARIKEVKQTPS</sequence>
<proteinExistence type="inferred from homology"/>
<gene>
    <name evidence="1" type="primary">rplS</name>
    <name type="ordered locus">DET0338</name>
</gene>
<accession>Q3Z9L4</accession>
<feature type="chain" id="PRO_0000226843" description="Large ribosomal subunit protein bL19">
    <location>
        <begin position="1"/>
        <end position="136"/>
    </location>
</feature>
<feature type="region of interest" description="Disordered" evidence="2">
    <location>
        <begin position="1"/>
        <end position="23"/>
    </location>
</feature>
<feature type="compositionally biased region" description="Acidic residues" evidence="2">
    <location>
        <begin position="12"/>
        <end position="23"/>
    </location>
</feature>
<name>RL19_DEHM1</name>
<protein>
    <recommendedName>
        <fullName evidence="1">Large ribosomal subunit protein bL19</fullName>
    </recommendedName>
    <alternativeName>
        <fullName evidence="3">50S ribosomal protein L19</fullName>
    </alternativeName>
</protein>
<reference key="1">
    <citation type="journal article" date="2005" name="Science">
        <title>Genome sequence of the PCE-dechlorinating bacterium Dehalococcoides ethenogenes.</title>
        <authorList>
            <person name="Seshadri R."/>
            <person name="Adrian L."/>
            <person name="Fouts D.E."/>
            <person name="Eisen J.A."/>
            <person name="Phillippy A.M."/>
            <person name="Methe B.A."/>
            <person name="Ward N.L."/>
            <person name="Nelson W.C."/>
            <person name="DeBoy R.T."/>
            <person name="Khouri H.M."/>
            <person name="Kolonay J.F."/>
            <person name="Dodson R.J."/>
            <person name="Daugherty S.C."/>
            <person name="Brinkac L.M."/>
            <person name="Sullivan S.A."/>
            <person name="Madupu R."/>
            <person name="Nelson K.E."/>
            <person name="Kang K.H."/>
            <person name="Impraim M."/>
            <person name="Tran K."/>
            <person name="Robinson J.M."/>
            <person name="Forberger H.A."/>
            <person name="Fraser C.M."/>
            <person name="Zinder S.H."/>
            <person name="Heidelberg J.F."/>
        </authorList>
    </citation>
    <scope>NUCLEOTIDE SEQUENCE [LARGE SCALE GENOMIC DNA]</scope>
    <source>
        <strain>ATCC BAA-2266 / KCTC 15142 / 195</strain>
    </source>
</reference>
<keyword id="KW-0687">Ribonucleoprotein</keyword>
<keyword id="KW-0689">Ribosomal protein</keyword>
<evidence type="ECO:0000255" key="1">
    <source>
        <dbReference type="HAMAP-Rule" id="MF_00402"/>
    </source>
</evidence>
<evidence type="ECO:0000256" key="2">
    <source>
        <dbReference type="SAM" id="MobiDB-lite"/>
    </source>
</evidence>
<evidence type="ECO:0000305" key="3"/>